<reference key="1">
    <citation type="journal article" date="2009" name="Appl. Environ. Microbiol.">
        <title>Three genomes from the phylum Acidobacteria provide insight into the lifestyles of these microorganisms in soils.</title>
        <authorList>
            <person name="Ward N.L."/>
            <person name="Challacombe J.F."/>
            <person name="Janssen P.H."/>
            <person name="Henrissat B."/>
            <person name="Coutinho P.M."/>
            <person name="Wu M."/>
            <person name="Xie G."/>
            <person name="Haft D.H."/>
            <person name="Sait M."/>
            <person name="Badger J."/>
            <person name="Barabote R.D."/>
            <person name="Bradley B."/>
            <person name="Brettin T.S."/>
            <person name="Brinkac L.M."/>
            <person name="Bruce D."/>
            <person name="Creasy T."/>
            <person name="Daugherty S.C."/>
            <person name="Davidsen T.M."/>
            <person name="DeBoy R.T."/>
            <person name="Detter J.C."/>
            <person name="Dodson R.J."/>
            <person name="Durkin A.S."/>
            <person name="Ganapathy A."/>
            <person name="Gwinn-Giglio M."/>
            <person name="Han C.S."/>
            <person name="Khouri H."/>
            <person name="Kiss H."/>
            <person name="Kothari S.P."/>
            <person name="Madupu R."/>
            <person name="Nelson K.E."/>
            <person name="Nelson W.C."/>
            <person name="Paulsen I."/>
            <person name="Penn K."/>
            <person name="Ren Q."/>
            <person name="Rosovitz M.J."/>
            <person name="Selengut J.D."/>
            <person name="Shrivastava S."/>
            <person name="Sullivan S.A."/>
            <person name="Tapia R."/>
            <person name="Thompson L.S."/>
            <person name="Watkins K.L."/>
            <person name="Yang Q."/>
            <person name="Yu C."/>
            <person name="Zafar N."/>
            <person name="Zhou L."/>
            <person name="Kuske C.R."/>
        </authorList>
    </citation>
    <scope>NUCLEOTIDE SEQUENCE [LARGE SCALE GENOMIC DNA]</scope>
    <source>
        <strain>Ellin345</strain>
    </source>
</reference>
<name>CH60_KORVE</name>
<dbReference type="EC" id="5.6.1.7" evidence="1"/>
<dbReference type="EMBL" id="CP000360">
    <property type="protein sequence ID" value="ABF40100.1"/>
    <property type="molecule type" value="Genomic_DNA"/>
</dbReference>
<dbReference type="RefSeq" id="WP_011521902.1">
    <property type="nucleotide sequence ID" value="NC_008009.1"/>
</dbReference>
<dbReference type="SMR" id="Q1ISQ0"/>
<dbReference type="STRING" id="204669.Acid345_1097"/>
<dbReference type="EnsemblBacteria" id="ABF40100">
    <property type="protein sequence ID" value="ABF40100"/>
    <property type="gene ID" value="Acid345_1097"/>
</dbReference>
<dbReference type="KEGG" id="aba:Acid345_1097"/>
<dbReference type="eggNOG" id="COG0459">
    <property type="taxonomic scope" value="Bacteria"/>
</dbReference>
<dbReference type="HOGENOM" id="CLU_016503_3_0_0"/>
<dbReference type="OrthoDB" id="9766614at2"/>
<dbReference type="Proteomes" id="UP000002432">
    <property type="component" value="Chromosome"/>
</dbReference>
<dbReference type="GO" id="GO:0005737">
    <property type="term" value="C:cytoplasm"/>
    <property type="evidence" value="ECO:0007669"/>
    <property type="project" value="UniProtKB-SubCell"/>
</dbReference>
<dbReference type="GO" id="GO:0005524">
    <property type="term" value="F:ATP binding"/>
    <property type="evidence" value="ECO:0007669"/>
    <property type="project" value="UniProtKB-UniRule"/>
</dbReference>
<dbReference type="GO" id="GO:0140662">
    <property type="term" value="F:ATP-dependent protein folding chaperone"/>
    <property type="evidence" value="ECO:0007669"/>
    <property type="project" value="InterPro"/>
</dbReference>
<dbReference type="GO" id="GO:0016853">
    <property type="term" value="F:isomerase activity"/>
    <property type="evidence" value="ECO:0007669"/>
    <property type="project" value="UniProtKB-KW"/>
</dbReference>
<dbReference type="GO" id="GO:0051082">
    <property type="term" value="F:unfolded protein binding"/>
    <property type="evidence" value="ECO:0007669"/>
    <property type="project" value="UniProtKB-UniRule"/>
</dbReference>
<dbReference type="GO" id="GO:0042026">
    <property type="term" value="P:protein refolding"/>
    <property type="evidence" value="ECO:0007669"/>
    <property type="project" value="UniProtKB-UniRule"/>
</dbReference>
<dbReference type="CDD" id="cd03344">
    <property type="entry name" value="GroEL"/>
    <property type="match status" value="1"/>
</dbReference>
<dbReference type="FunFam" id="3.50.7.10:FF:000001">
    <property type="entry name" value="60 kDa chaperonin"/>
    <property type="match status" value="1"/>
</dbReference>
<dbReference type="Gene3D" id="3.50.7.10">
    <property type="entry name" value="GroEL"/>
    <property type="match status" value="1"/>
</dbReference>
<dbReference type="Gene3D" id="1.10.560.10">
    <property type="entry name" value="GroEL-like equatorial domain"/>
    <property type="match status" value="1"/>
</dbReference>
<dbReference type="Gene3D" id="3.30.260.10">
    <property type="entry name" value="TCP-1-like chaperonin intermediate domain"/>
    <property type="match status" value="1"/>
</dbReference>
<dbReference type="HAMAP" id="MF_00600">
    <property type="entry name" value="CH60"/>
    <property type="match status" value="1"/>
</dbReference>
<dbReference type="InterPro" id="IPR018370">
    <property type="entry name" value="Chaperonin_Cpn60_CS"/>
</dbReference>
<dbReference type="InterPro" id="IPR001844">
    <property type="entry name" value="Cpn60/GroEL"/>
</dbReference>
<dbReference type="InterPro" id="IPR002423">
    <property type="entry name" value="Cpn60/GroEL/TCP-1"/>
</dbReference>
<dbReference type="InterPro" id="IPR027409">
    <property type="entry name" value="GroEL-like_apical_dom_sf"/>
</dbReference>
<dbReference type="InterPro" id="IPR027413">
    <property type="entry name" value="GROEL-like_equatorial_sf"/>
</dbReference>
<dbReference type="InterPro" id="IPR027410">
    <property type="entry name" value="TCP-1-like_intermed_sf"/>
</dbReference>
<dbReference type="NCBIfam" id="TIGR02348">
    <property type="entry name" value="GroEL"/>
    <property type="match status" value="1"/>
</dbReference>
<dbReference type="NCBIfam" id="NF000592">
    <property type="entry name" value="PRK00013.1"/>
    <property type="match status" value="1"/>
</dbReference>
<dbReference type="NCBIfam" id="NF009487">
    <property type="entry name" value="PRK12849.1"/>
    <property type="match status" value="1"/>
</dbReference>
<dbReference type="NCBIfam" id="NF009488">
    <property type="entry name" value="PRK12850.1"/>
    <property type="match status" value="1"/>
</dbReference>
<dbReference type="NCBIfam" id="NF009489">
    <property type="entry name" value="PRK12851.1"/>
    <property type="match status" value="1"/>
</dbReference>
<dbReference type="PANTHER" id="PTHR45633">
    <property type="entry name" value="60 KDA HEAT SHOCK PROTEIN, MITOCHONDRIAL"/>
    <property type="match status" value="1"/>
</dbReference>
<dbReference type="Pfam" id="PF00118">
    <property type="entry name" value="Cpn60_TCP1"/>
    <property type="match status" value="1"/>
</dbReference>
<dbReference type="PRINTS" id="PR00298">
    <property type="entry name" value="CHAPERONIN60"/>
</dbReference>
<dbReference type="SUPFAM" id="SSF52029">
    <property type="entry name" value="GroEL apical domain-like"/>
    <property type="match status" value="1"/>
</dbReference>
<dbReference type="SUPFAM" id="SSF48592">
    <property type="entry name" value="GroEL equatorial domain-like"/>
    <property type="match status" value="1"/>
</dbReference>
<dbReference type="SUPFAM" id="SSF54849">
    <property type="entry name" value="GroEL-intermediate domain like"/>
    <property type="match status" value="1"/>
</dbReference>
<dbReference type="PROSITE" id="PS00296">
    <property type="entry name" value="CHAPERONINS_CPN60"/>
    <property type="match status" value="1"/>
</dbReference>
<sequence>MAKQIVHGEESRQSILRGVNVLADAVKVTLGPKGRNVVIDKKFGSPLITKDGVTVAKEIELKDTLENMGAQMVKEVASKTSDIAGDGTTTATVLAQAIYREGVKNVAAGSNPMALKRGIDKAVTAVCGYNDAEGNRIPGALDKFSKPVTGEMIAQVGTISANNDETIGKIIAEAMKKVGKDGVITVEESKTMETQLEVVEGMQFDRGYLSPYFVTDPERMEAVLENPYILIHEKKVSSMKDLLPLLEQIAKGGRPLVIIAEDVEGEALATLVVNKLRGTLNVAAVKAPGFGDRRKAMLQDIAILTGGKAITEDLGIKLENVHMDDLGSAKKVTIDKDNTTIVEGKGKSSDIEGRVKEIRSQVEKTTSDYDREKLQERLAKLVGGVAVIKVGAATETEMKEKKARVEDAMHATRAAVEEGIVPGGGVALIRCVEAVDALKLTGDEGIGANIIKRALEEPLRQIVGNAGEEGAIVVGKIRDHKDPHYGYNAQTSEYVDLVKAGVIDPTKVTRTALQNAGSIAGLMLTTEALISEIPEEKKSEPAGGHGGGMGGMY</sequence>
<accession>Q1ISQ0</accession>
<comment type="function">
    <text evidence="1">Together with its co-chaperonin GroES, plays an essential role in assisting protein folding. The GroEL-GroES system forms a nano-cage that allows encapsulation of the non-native substrate proteins and provides a physical environment optimized to promote and accelerate protein folding.</text>
</comment>
<comment type="catalytic activity">
    <reaction evidence="1">
        <text>ATP + H2O + a folded polypeptide = ADP + phosphate + an unfolded polypeptide.</text>
        <dbReference type="EC" id="5.6.1.7"/>
    </reaction>
</comment>
<comment type="subunit">
    <text evidence="1">Forms a cylinder of 14 subunits composed of two heptameric rings stacked back-to-back. Interacts with the co-chaperonin GroES.</text>
</comment>
<comment type="subcellular location">
    <subcellularLocation>
        <location evidence="1">Cytoplasm</location>
    </subcellularLocation>
</comment>
<comment type="similarity">
    <text evidence="1">Belongs to the chaperonin (HSP60) family.</text>
</comment>
<keyword id="KW-0067">ATP-binding</keyword>
<keyword id="KW-0143">Chaperone</keyword>
<keyword id="KW-0963">Cytoplasm</keyword>
<keyword id="KW-0413">Isomerase</keyword>
<keyword id="KW-0547">Nucleotide-binding</keyword>
<keyword id="KW-1185">Reference proteome</keyword>
<feature type="chain" id="PRO_0000256866" description="Chaperonin GroEL">
    <location>
        <begin position="1"/>
        <end position="553"/>
    </location>
</feature>
<feature type="binding site" evidence="1">
    <location>
        <begin position="29"/>
        <end position="32"/>
    </location>
    <ligand>
        <name>ATP</name>
        <dbReference type="ChEBI" id="CHEBI:30616"/>
    </ligand>
</feature>
<feature type="binding site" evidence="1">
    <location>
        <position position="50"/>
    </location>
    <ligand>
        <name>ATP</name>
        <dbReference type="ChEBI" id="CHEBI:30616"/>
    </ligand>
</feature>
<feature type="binding site" evidence="1">
    <location>
        <begin position="86"/>
        <end position="90"/>
    </location>
    <ligand>
        <name>ATP</name>
        <dbReference type="ChEBI" id="CHEBI:30616"/>
    </ligand>
</feature>
<feature type="binding site" evidence="1">
    <location>
        <position position="424"/>
    </location>
    <ligand>
        <name>ATP</name>
        <dbReference type="ChEBI" id="CHEBI:30616"/>
    </ligand>
</feature>
<feature type="binding site" evidence="1">
    <location>
        <position position="504"/>
    </location>
    <ligand>
        <name>ATP</name>
        <dbReference type="ChEBI" id="CHEBI:30616"/>
    </ligand>
</feature>
<proteinExistence type="inferred from homology"/>
<organism>
    <name type="scientific">Koribacter versatilis (strain Ellin345)</name>
    <dbReference type="NCBI Taxonomy" id="204669"/>
    <lineage>
        <taxon>Bacteria</taxon>
        <taxon>Pseudomonadati</taxon>
        <taxon>Acidobacteriota</taxon>
        <taxon>Terriglobia</taxon>
        <taxon>Terriglobales</taxon>
        <taxon>Candidatus Korobacteraceae</taxon>
        <taxon>Candidatus Korobacter</taxon>
    </lineage>
</organism>
<evidence type="ECO:0000255" key="1">
    <source>
        <dbReference type="HAMAP-Rule" id="MF_00600"/>
    </source>
</evidence>
<gene>
    <name evidence="1" type="primary">groEL</name>
    <name evidence="1" type="synonym">groL</name>
    <name type="ordered locus">Acid345_1097</name>
</gene>
<protein>
    <recommendedName>
        <fullName evidence="1">Chaperonin GroEL</fullName>
        <ecNumber evidence="1">5.6.1.7</ecNumber>
    </recommendedName>
    <alternativeName>
        <fullName evidence="1">60 kDa chaperonin</fullName>
    </alternativeName>
    <alternativeName>
        <fullName evidence="1">Chaperonin-60</fullName>
        <shortName evidence="1">Cpn60</shortName>
    </alternativeName>
</protein>